<name>EXOR_RHILV</name>
<sequence>MVTSEFKLFKFMLMGMSIAVALALSGPCRAFDIKGGVSKESGPFDLFKFGFKAYKNGQKEEAVEAYRYAAEKGHTGSRWALANMYADGDGVTQDDFEAFKIYSEIAQQGVEPGSEDTGFFVNALLSLANYYKHGIAGSPVRIDLSQARQLYFQVASTFGVPEAQFQLAQMMLAGEGGNASPQQAKKWLNQARKSGHPGAMAVFGNILFDEGQTARGLALMTAALDRCKPKDCGWMEALQEQAFSVANEADRRTAVSLSHSIATGSDD</sequence>
<proteinExistence type="inferred from homology"/>
<gene>
    <name type="primary">exoR</name>
</gene>
<protein>
    <recommendedName>
        <fullName>Exopolysaccharide production negative regulator</fullName>
    </recommendedName>
</protein>
<organism>
    <name type="scientific">Rhizobium leguminosarum bv. viciae</name>
    <dbReference type="NCBI Taxonomy" id="387"/>
    <lineage>
        <taxon>Bacteria</taxon>
        <taxon>Pseudomonadati</taxon>
        <taxon>Pseudomonadota</taxon>
        <taxon>Alphaproteobacteria</taxon>
        <taxon>Hyphomicrobiales</taxon>
        <taxon>Rhizobiaceae</taxon>
        <taxon>Rhizobium/Agrobacterium group</taxon>
        <taxon>Rhizobium</taxon>
    </lineage>
</organism>
<keyword id="KW-0270">Exopolysaccharide synthesis</keyword>
<keyword id="KW-0732">Signal</keyword>
<accession>Q52822</accession>
<comment type="function">
    <text>Negatively modulates exopolysaccharide (EPS) biosynthesis.</text>
</comment>
<reference key="1">
    <citation type="journal article" date="1997" name="Microbiology">
        <title>Regulation of exopolysaccharide production in Rhizobium leguminosarum biovar viciae WSM710 involves exoR.</title>
        <authorList>
            <person name="Reeve W.G."/>
            <person name="Dilworth M.J."/>
            <person name="Tiwari R.P."/>
            <person name="Glenn A.R."/>
        </authorList>
    </citation>
    <scope>NUCLEOTIDE SEQUENCE [GENOMIC DNA]</scope>
    <source>
        <strain>WSM710 / WR6-35</strain>
    </source>
</reference>
<evidence type="ECO:0000255" key="1"/>
<feature type="signal peptide" evidence="1">
    <location>
        <begin position="1"/>
        <end position="23"/>
    </location>
</feature>
<feature type="chain" id="PRO_0000021217" description="Exopolysaccharide production negative regulator">
    <location>
        <begin position="24"/>
        <end position="267"/>
    </location>
</feature>
<dbReference type="EMBL" id="L39937">
    <property type="protein sequence ID" value="AAB63941.1"/>
    <property type="molecule type" value="Genomic_DNA"/>
</dbReference>
<dbReference type="SMR" id="Q52822"/>
<dbReference type="GO" id="GO:0000271">
    <property type="term" value="P:polysaccharide biosynthetic process"/>
    <property type="evidence" value="ECO:0007669"/>
    <property type="project" value="UniProtKB-KW"/>
</dbReference>
<dbReference type="Gene3D" id="1.25.40.10">
    <property type="entry name" value="Tetratricopeptide repeat domain"/>
    <property type="match status" value="1"/>
</dbReference>
<dbReference type="InterPro" id="IPR053479">
    <property type="entry name" value="EPS_Regulator"/>
</dbReference>
<dbReference type="InterPro" id="IPR006597">
    <property type="entry name" value="Sel1-like"/>
</dbReference>
<dbReference type="InterPro" id="IPR050767">
    <property type="entry name" value="Sel1_AlgK"/>
</dbReference>
<dbReference type="InterPro" id="IPR011990">
    <property type="entry name" value="TPR-like_helical_dom_sf"/>
</dbReference>
<dbReference type="NCBIfam" id="NF045484">
    <property type="entry name" value="TransRegExoR"/>
    <property type="match status" value="1"/>
</dbReference>
<dbReference type="PANTHER" id="PTHR11102:SF160">
    <property type="entry name" value="ERAD-ASSOCIATED E3 UBIQUITIN-PROTEIN LIGASE COMPONENT HRD3"/>
    <property type="match status" value="1"/>
</dbReference>
<dbReference type="PANTHER" id="PTHR11102">
    <property type="entry name" value="SEL-1-LIKE PROTEIN"/>
    <property type="match status" value="1"/>
</dbReference>
<dbReference type="Pfam" id="PF08238">
    <property type="entry name" value="Sel1"/>
    <property type="match status" value="3"/>
</dbReference>
<dbReference type="SMART" id="SM00671">
    <property type="entry name" value="SEL1"/>
    <property type="match status" value="3"/>
</dbReference>
<dbReference type="SUPFAM" id="SSF81901">
    <property type="entry name" value="HCP-like"/>
    <property type="match status" value="1"/>
</dbReference>